<feature type="chain" id="PRO_0000257677" description="Biosynthetic peptidoglycan transglycosylase">
    <location>
        <begin position="1"/>
        <end position="226"/>
    </location>
</feature>
<feature type="transmembrane region" description="Helical" evidence="1">
    <location>
        <begin position="7"/>
        <end position="29"/>
    </location>
</feature>
<proteinExistence type="inferred from homology"/>
<reference key="1">
    <citation type="journal article" date="2006" name="Appl. Environ. Microbiol.">
        <title>Genome sequence of the chemolithoautotrophic nitrite-oxidizing bacterium Nitrobacter winogradskyi Nb-255.</title>
        <authorList>
            <person name="Starkenburg S.R."/>
            <person name="Chain P.S.G."/>
            <person name="Sayavedra-Soto L.A."/>
            <person name="Hauser L."/>
            <person name="Land M.L."/>
            <person name="Larimer F.W."/>
            <person name="Malfatti S.A."/>
            <person name="Klotz M.G."/>
            <person name="Bottomley P.J."/>
            <person name="Arp D.J."/>
            <person name="Hickey W.J."/>
        </authorList>
    </citation>
    <scope>NUCLEOTIDE SEQUENCE [LARGE SCALE GENOMIC DNA]</scope>
    <source>
        <strain>ATCC 25391 / DSM 10237 / CIP 104748 / NCIMB 11846 / Nb-255</strain>
    </source>
</reference>
<protein>
    <recommendedName>
        <fullName evidence="1">Biosynthetic peptidoglycan transglycosylase</fullName>
        <ecNumber evidence="1">2.4.99.28</ecNumber>
    </recommendedName>
    <alternativeName>
        <fullName evidence="1">Glycan polymerase</fullName>
    </alternativeName>
    <alternativeName>
        <fullName evidence="1">Peptidoglycan glycosyltransferase MtgA</fullName>
        <shortName evidence="1">PGT</shortName>
    </alternativeName>
</protein>
<evidence type="ECO:0000255" key="1">
    <source>
        <dbReference type="HAMAP-Rule" id="MF_00766"/>
    </source>
</evidence>
<dbReference type="EC" id="2.4.99.28" evidence="1"/>
<dbReference type="EMBL" id="CP000115">
    <property type="protein sequence ID" value="ABA03763.1"/>
    <property type="molecule type" value="Genomic_DNA"/>
</dbReference>
<dbReference type="RefSeq" id="WP_011313824.1">
    <property type="nucleotide sequence ID" value="NC_007406.1"/>
</dbReference>
<dbReference type="SMR" id="Q3SVC8"/>
<dbReference type="STRING" id="323098.Nwi_0496"/>
<dbReference type="CAZy" id="GT51">
    <property type="family name" value="Glycosyltransferase Family 51"/>
</dbReference>
<dbReference type="KEGG" id="nwi:Nwi_0496"/>
<dbReference type="eggNOG" id="COG0744">
    <property type="taxonomic scope" value="Bacteria"/>
</dbReference>
<dbReference type="HOGENOM" id="CLU_006354_1_1_5"/>
<dbReference type="OrthoDB" id="9766909at2"/>
<dbReference type="UniPathway" id="UPA00219"/>
<dbReference type="Proteomes" id="UP000002531">
    <property type="component" value="Chromosome"/>
</dbReference>
<dbReference type="GO" id="GO:0009274">
    <property type="term" value="C:peptidoglycan-based cell wall"/>
    <property type="evidence" value="ECO:0007669"/>
    <property type="project" value="InterPro"/>
</dbReference>
<dbReference type="GO" id="GO:0005886">
    <property type="term" value="C:plasma membrane"/>
    <property type="evidence" value="ECO:0007669"/>
    <property type="project" value="UniProtKB-SubCell"/>
</dbReference>
<dbReference type="GO" id="GO:0016763">
    <property type="term" value="F:pentosyltransferase activity"/>
    <property type="evidence" value="ECO:0007669"/>
    <property type="project" value="InterPro"/>
</dbReference>
<dbReference type="GO" id="GO:0008955">
    <property type="term" value="F:peptidoglycan glycosyltransferase activity"/>
    <property type="evidence" value="ECO:0007669"/>
    <property type="project" value="UniProtKB-UniRule"/>
</dbReference>
<dbReference type="GO" id="GO:0071555">
    <property type="term" value="P:cell wall organization"/>
    <property type="evidence" value="ECO:0007669"/>
    <property type="project" value="UniProtKB-KW"/>
</dbReference>
<dbReference type="GO" id="GO:0009252">
    <property type="term" value="P:peptidoglycan biosynthetic process"/>
    <property type="evidence" value="ECO:0007669"/>
    <property type="project" value="UniProtKB-UniRule"/>
</dbReference>
<dbReference type="GO" id="GO:0008360">
    <property type="term" value="P:regulation of cell shape"/>
    <property type="evidence" value="ECO:0007669"/>
    <property type="project" value="UniProtKB-KW"/>
</dbReference>
<dbReference type="Gene3D" id="1.10.3810.10">
    <property type="entry name" value="Biosynthetic peptidoglycan transglycosylase-like"/>
    <property type="match status" value="1"/>
</dbReference>
<dbReference type="HAMAP" id="MF_00766">
    <property type="entry name" value="PGT_MtgA"/>
    <property type="match status" value="1"/>
</dbReference>
<dbReference type="InterPro" id="IPR001264">
    <property type="entry name" value="Glyco_trans_51"/>
</dbReference>
<dbReference type="InterPro" id="IPR023346">
    <property type="entry name" value="Lysozyme-like_dom_sf"/>
</dbReference>
<dbReference type="InterPro" id="IPR036950">
    <property type="entry name" value="PBP_transglycosylase"/>
</dbReference>
<dbReference type="InterPro" id="IPR011812">
    <property type="entry name" value="Pep_trsgly"/>
</dbReference>
<dbReference type="NCBIfam" id="TIGR02070">
    <property type="entry name" value="mono_pep_trsgly"/>
    <property type="match status" value="1"/>
</dbReference>
<dbReference type="PANTHER" id="PTHR30400:SF0">
    <property type="entry name" value="BIOSYNTHETIC PEPTIDOGLYCAN TRANSGLYCOSYLASE"/>
    <property type="match status" value="1"/>
</dbReference>
<dbReference type="PANTHER" id="PTHR30400">
    <property type="entry name" value="MONOFUNCTIONAL BIOSYNTHETIC PEPTIDOGLYCAN TRANSGLYCOSYLASE"/>
    <property type="match status" value="1"/>
</dbReference>
<dbReference type="Pfam" id="PF00912">
    <property type="entry name" value="Transgly"/>
    <property type="match status" value="1"/>
</dbReference>
<dbReference type="SUPFAM" id="SSF53955">
    <property type="entry name" value="Lysozyme-like"/>
    <property type="match status" value="1"/>
</dbReference>
<accession>Q3SVC8</accession>
<organism>
    <name type="scientific">Nitrobacter winogradskyi (strain ATCC 25391 / DSM 10237 / CIP 104748 / NCIMB 11846 / Nb-255)</name>
    <dbReference type="NCBI Taxonomy" id="323098"/>
    <lineage>
        <taxon>Bacteria</taxon>
        <taxon>Pseudomonadati</taxon>
        <taxon>Pseudomonadota</taxon>
        <taxon>Alphaproteobacteria</taxon>
        <taxon>Hyphomicrobiales</taxon>
        <taxon>Nitrobacteraceae</taxon>
        <taxon>Nitrobacter</taxon>
    </lineage>
</organism>
<name>MTGA_NITWN</name>
<sequence>MRRAIRVMALSAIGLLLLPYLLTPLYRIGHPVSTLMIWRTLSGAPMSRQWIDFAALPPSLPRSVVASEDAKFCSHQGIDWDSLREVLDDAEDGEFKRGGSTITQQVAKNLFLWPGRSMVRKALEFPLAMWIDAVLSKQRILEIYLNIAEWGPGGQFGVEAGSRYAFGRSAASLTAREAALMAAILPNPVRRSARKPGPGVRRLAGTYMARARAAELRGCWSGNRSL</sequence>
<gene>
    <name evidence="1" type="primary">mtgA</name>
    <name type="ordered locus">Nwi_0496</name>
</gene>
<keyword id="KW-0997">Cell inner membrane</keyword>
<keyword id="KW-1003">Cell membrane</keyword>
<keyword id="KW-0133">Cell shape</keyword>
<keyword id="KW-0961">Cell wall biogenesis/degradation</keyword>
<keyword id="KW-0328">Glycosyltransferase</keyword>
<keyword id="KW-0472">Membrane</keyword>
<keyword id="KW-0573">Peptidoglycan synthesis</keyword>
<keyword id="KW-1185">Reference proteome</keyword>
<keyword id="KW-0808">Transferase</keyword>
<keyword id="KW-0812">Transmembrane</keyword>
<keyword id="KW-1133">Transmembrane helix</keyword>
<comment type="function">
    <text evidence="1">Peptidoglycan polymerase that catalyzes glycan chain elongation from lipid-linked precursors.</text>
</comment>
<comment type="catalytic activity">
    <reaction evidence="1">
        <text>[GlcNAc-(1-&gt;4)-Mur2Ac(oyl-L-Ala-gamma-D-Glu-L-Lys-D-Ala-D-Ala)](n)-di-trans,octa-cis-undecaprenyl diphosphate + beta-D-GlcNAc-(1-&gt;4)-Mur2Ac(oyl-L-Ala-gamma-D-Glu-L-Lys-D-Ala-D-Ala)-di-trans,octa-cis-undecaprenyl diphosphate = [GlcNAc-(1-&gt;4)-Mur2Ac(oyl-L-Ala-gamma-D-Glu-L-Lys-D-Ala-D-Ala)](n+1)-di-trans,octa-cis-undecaprenyl diphosphate + di-trans,octa-cis-undecaprenyl diphosphate + H(+)</text>
        <dbReference type="Rhea" id="RHEA:23708"/>
        <dbReference type="Rhea" id="RHEA-COMP:9602"/>
        <dbReference type="Rhea" id="RHEA-COMP:9603"/>
        <dbReference type="ChEBI" id="CHEBI:15378"/>
        <dbReference type="ChEBI" id="CHEBI:58405"/>
        <dbReference type="ChEBI" id="CHEBI:60033"/>
        <dbReference type="ChEBI" id="CHEBI:78435"/>
        <dbReference type="EC" id="2.4.99.28"/>
    </reaction>
</comment>
<comment type="pathway">
    <text evidence="1">Cell wall biogenesis; peptidoglycan biosynthesis.</text>
</comment>
<comment type="subcellular location">
    <subcellularLocation>
        <location evidence="1">Cell inner membrane</location>
        <topology evidence="1">Single-pass membrane protein</topology>
    </subcellularLocation>
</comment>
<comment type="similarity">
    <text evidence="1">Belongs to the glycosyltransferase 51 family.</text>
</comment>